<proteinExistence type="evidence at protein level"/>
<sequence>MLGSSVKSVQPEVELSSGGGDEGADEPRGAGRKAAAADGRGMLPKRAKAPGGGGGMAKASAAELKVFKSGSVDSRVPGGPPASNLRKQKSLTNLSFLTDSEKKLQLYEPEWSDDMAKAPKGLGKVGSKGREAPLMSKTLSKSEHSLFQAKGSPAGGAKTPLAPLAPNLGKPSRIPRGPYAEVKPLSKAPEAAVSEDGKSDDELLSSKAKAQKSSGPVPSAKGQEERAFLKVDPELVVTVLGDLEQLLFSQMLDPESQRKRTVQNVLDLRQNLEETMSSLRGSQVTHSSLEMTCYDSDDANPRSVSSLSNRSSPLSWRYGQSSPRLQAGDAPSVGGSCRSEGTPAWYMHGERAHYSHTMPMRSPSKLSHISRLELVESLDSDEVDLKSGYMSDSDLMGKTMTEDDDITTGWDESSSISSGLSDASDNLSSEEFNASSSLNSLPSTPTASRRNSTIVLRTDSEKRSLAESGLSWFSESEEKAPKKLEYDSGSLKMEPGTSKWRRERPESCDDSSKGGELKKPISLGHPGSLKKGKTPPVAVTSPITHTAQSALKVAGKPEGKATDKGKLAVKNTGLQRSSSDAGRDRLSDAKKPPSGIARPSTSGSFGYKKPPPATGTATVMQTGGSATLSKIQKSSGIPVKPVNGRKTSLDVSNSAEPGFLAPGARSNIQYRSLPRPAKSSSMSVTGGRGGPRPVSSSIDPSLLSTKQGGLTPSRLKEPTKVASGRTTPAPVNQTDREKEKAKAKAVALDSDNISLKSIGSPESTPKNQASHPTATKLAELPPTPLRATAKSFVKPPSLANLDKVNSNSLDLPSSSDTTHASKVPDLHATSSASGGPLPSCFTPSPAPILNINSASFSQGLELMSGFSVPKETRMYPKLSGLHRSMESLQMPMSLPSAFPSSTPVPTPPAPPAAPTEEETEELTWSGSPRAGQLDSNQRDRNTLPKKGLRYQLQSQEETKERRHSHTIGGLPESDDQSELPSPPALPMSLSAKGQLTNIVSPTAATTPRITRSNSIPTHEAAFELYSGSQMGSTLSLAERPKGMIRSGSFRDPTDDVHGSVLSLASSASSTYSSAEERMQSEQIRKLRRELESSQEKVATLTSQLSANANLVAAFEQSLVNMTSRLRHLAETAEEKDTELLDLRETIDFLKKKNSEAQAVIQGALNASETTPKELRIKRQNSSDSISSLNSITSHSSIGSSKDADAKKKKKKSWVYELRSSFNKAFSIKKGPKSASSYSDIEEIATPDSSAPSSPKLQHGSTETASPSIKSSTSSSVGTDVTEGPAHPAPHTRLFHANEEEEPEKKEVSELRSELWEKEMKLTDIRLEALNSAHQLDQLRETMHNMQLEVDLLKAENDRLKVAPGPSSGSTPGQVPGSSALSSPRRSLGLALTHSFGPSLADTDLSPMDGISTCGPKEEVTLRVVVRMPPQHIIKGDLKQQEFFLGCSKVSGKVDWKMLDEAVFQVFKDYISKMDPASTLGLSTESIHGYSISHVKRVLDAEPPEMPPCRRGVNNISVSLKGLKEKCVDSLVFETLIPKPMMQHYISLLLKHRRLVLSGPSGTGKTYLTNRLAEYLVERSGREVTEGIVSTFNMHQQSCKDLQLYLSNLANQIDRETGIGDVPLVILLDDLSEAGSISELVNGALTCKYHKCPYIIGTTNQPVKMTPNHGLHLSFRMLTFSNNVEPANGFLVRYLRRKLVESDSDINANKEELLRVLDWVPKLWYHLHTFLEKHSTSDFLIGPCFFLSCPIGIEDFRTWFIDLWNNSIIPYLQEGAKDGIKVHGQKAAWEDPVEWVRDTLPWPSAQQDQSKLYHLPPPTVGPHSIASPPEDRTVKDSTPSSLDSDPLMAMLLKLQEAANYIESPDRETILDPNLQATL</sequence>
<comment type="function">
    <text evidence="1">May be involved in neuronal migration.</text>
</comment>
<comment type="subunit">
    <text evidence="1">Interacts with tubulin.</text>
</comment>
<comment type="interaction">
    <interactant intactId="EBI-308358">
        <id>Q8NEY1</id>
    </interactant>
    <interactant intactId="EBI-529989">
        <id>Q9NRI5</id>
        <label>DISC1</label>
    </interactant>
    <organismsDiffer>false</organismsDiffer>
    <experiments>3</experiments>
</comment>
<comment type="interaction">
    <interactant intactId="EBI-308358">
        <id>Q8NEY1</id>
    </interactant>
    <interactant intactId="EBI-476295">
        <id>P31947</id>
        <label>SFN</label>
    </interactant>
    <organismsDiffer>false</organismsDiffer>
    <experiments>4</experiments>
</comment>
<comment type="interaction">
    <interactant intactId="EBI-308358">
        <id>Q8NEY1</id>
    </interactant>
    <interactant intactId="EBI-356498">
        <id>P62258</id>
        <label>YWHAE</label>
    </interactant>
    <organismsDiffer>false</organismsDiffer>
    <experiments>4</experiments>
</comment>
<comment type="interaction">
    <interactant intactId="EBI-11953718">
        <id>Q8NEY1-3</id>
    </interactant>
    <interactant intactId="EBI-742054">
        <id>Q96D03</id>
        <label>DDIT4L</label>
    </interactant>
    <organismsDiffer>false</organismsDiffer>
    <experiments>5</experiments>
</comment>
<comment type="interaction">
    <interactant intactId="EBI-11953718">
        <id>Q8NEY1-3</id>
    </interactant>
    <interactant intactId="EBI-746252">
        <id>Q96CN9</id>
        <label>GCC1</label>
    </interactant>
    <organismsDiffer>false</organismsDiffer>
    <experiments>3</experiments>
</comment>
<comment type="interaction">
    <interactant intactId="EBI-11953718">
        <id>Q8NEY1-3</id>
    </interactant>
    <interactant intactId="EBI-948001">
        <id>Q15323</id>
        <label>KRT31</label>
    </interactant>
    <organismsDiffer>false</organismsDiffer>
    <experiments>3</experiments>
</comment>
<comment type="interaction">
    <interactant intactId="EBI-11953718">
        <id>Q8NEY1-3</id>
    </interactant>
    <interactant intactId="EBI-10044038">
        <id>Q96LW4</id>
        <label>PRIMPOL</label>
    </interactant>
    <organismsDiffer>false</organismsDiffer>
    <experiments>5</experiments>
</comment>
<comment type="interaction">
    <interactant intactId="EBI-11953718">
        <id>Q8NEY1-3</id>
    </interactant>
    <interactant intactId="EBI-953753">
        <id>Q7L4I2</id>
        <label>RSRC2</label>
    </interactant>
    <organismsDiffer>false</organismsDiffer>
    <experiments>3</experiments>
</comment>
<comment type="interaction">
    <interactant intactId="EBI-10270828">
        <id>Q8NEY1-4</id>
    </interactant>
    <interactant intactId="EBI-746252">
        <id>Q96CN9</id>
        <label>GCC1</label>
    </interactant>
    <organismsDiffer>false</organismsDiffer>
    <experiments>3</experiments>
</comment>
<comment type="interaction">
    <interactant intactId="EBI-10270828">
        <id>Q8NEY1-4</id>
    </interactant>
    <interactant intactId="EBI-948001">
        <id>Q15323</id>
        <label>KRT31</label>
    </interactant>
    <organismsDiffer>false</organismsDiffer>
    <experiments>3</experiments>
</comment>
<comment type="subcellular location">
    <subcellularLocation>
        <location evidence="1">Cytoplasm</location>
        <location evidence="1">Cytoskeleton</location>
    </subcellularLocation>
    <text evidence="1">Associates with a subset of microtubule plus ends. Enriched in neuronal growth cones (By similarity).</text>
</comment>
<comment type="alternative products">
    <event type="alternative splicing"/>
    <isoform>
        <id>Q8NEY1-1</id>
        <name>1</name>
        <sequence type="displayed"/>
    </isoform>
    <isoform>
        <id>Q8NEY1-2</id>
        <name>2</name>
        <sequence type="described" ref="VSP_025256"/>
    </isoform>
    <isoform>
        <id>Q8NEY1-3</id>
        <name>3</name>
        <sequence type="described" ref="VSP_025259"/>
    </isoform>
    <isoform>
        <id>Q8NEY1-4</id>
        <name>4</name>
        <sequence type="described" ref="VSP_025255 VSP_025259"/>
    </isoform>
    <isoform>
        <id>Q8NEY1-5</id>
        <name>5</name>
        <sequence type="described" ref="VSP_025253 VSP_025254 VSP_025259"/>
    </isoform>
    <isoform>
        <id>Q8NEY1-6</id>
        <name>6</name>
        <sequence type="described" ref="VSP_025256 VSP_025257 VSP_025258"/>
    </isoform>
    <isoform>
        <id>Q8NEY1-7</id>
        <name>7</name>
        <sequence type="described" ref="VSP_025255 VSP_025256 VSP_025259"/>
    </isoform>
</comment>
<comment type="tissue specificity">
    <text evidence="5 6">Broadly expressed at low levels. Expressed at high levels in heart, skeletal muscle and placenta.</text>
</comment>
<comment type="developmental stage">
    <text evidence="5">Expressed in fetal brain and heart.</text>
</comment>
<comment type="similarity">
    <text evidence="10">Belongs to the Nav/unc-53 family.</text>
</comment>
<comment type="sequence caution" evidence="10">
    <conflict type="erroneous initiation">
        <sequence resource="EMBL-CDS" id="AAH07523"/>
    </conflict>
</comment>
<comment type="sequence caution" evidence="10">
    <conflict type="erroneous initiation">
        <sequence resource="EMBL-CDS" id="BAB14136"/>
    </conflict>
</comment>
<comment type="sequence caution" evidence="10">
    <conflict type="erroneous initiation">
        <sequence resource="EMBL-CDS" id="BAB14142"/>
    </conflict>
</comment>
<comment type="sequence caution" evidence="10">
    <conflict type="erroneous initiation">
        <sequence resource="EMBL-CDS" id="BAB14865"/>
    </conflict>
</comment>
<accession>Q8NEY1</accession>
<accession>A8MS88</accession>
<accession>Q5SVH1</accession>
<accession>Q5SVH2</accession>
<accession>Q5SVH3</accession>
<accession>Q5SVH7</accession>
<accession>Q5VUY9</accession>
<accession>Q8IVL2</accession>
<accession>Q96II1</accession>
<accession>Q9H7V9</accession>
<accession>Q9H9S9</accession>
<accession>Q9H9T5</accession>
<accession>Q9UGI1</accession>
<accession>Q9ULK7</accession>
<accession>Q9ULR9</accession>
<gene>
    <name type="primary">NAV1</name>
    <name type="synonym">KIAA1151</name>
    <name type="synonym">KIAA1213</name>
    <name type="synonym">POMFIL3</name>
    <name type="synonym">STEERIN1</name>
</gene>
<keyword id="KW-0007">Acetylation</keyword>
<keyword id="KW-0025">Alternative splicing</keyword>
<keyword id="KW-0175">Coiled coil</keyword>
<keyword id="KW-0963">Cytoplasm</keyword>
<keyword id="KW-0206">Cytoskeleton</keyword>
<keyword id="KW-0217">Developmental protein</keyword>
<keyword id="KW-0221">Differentiation</keyword>
<keyword id="KW-0488">Methylation</keyword>
<keyword id="KW-0493">Microtubule</keyword>
<keyword id="KW-0524">Neurogenesis</keyword>
<keyword id="KW-0597">Phosphoprotein</keyword>
<keyword id="KW-1267">Proteomics identification</keyword>
<keyword id="KW-1185">Reference proteome</keyword>
<name>NAV1_HUMAN</name>
<organism>
    <name type="scientific">Homo sapiens</name>
    <name type="common">Human</name>
    <dbReference type="NCBI Taxonomy" id="9606"/>
    <lineage>
        <taxon>Eukaryota</taxon>
        <taxon>Metazoa</taxon>
        <taxon>Chordata</taxon>
        <taxon>Craniata</taxon>
        <taxon>Vertebrata</taxon>
        <taxon>Euteleostomi</taxon>
        <taxon>Mammalia</taxon>
        <taxon>Eutheria</taxon>
        <taxon>Euarchontoglires</taxon>
        <taxon>Primates</taxon>
        <taxon>Haplorrhini</taxon>
        <taxon>Catarrhini</taxon>
        <taxon>Hominidae</taxon>
        <taxon>Homo</taxon>
    </lineage>
</organism>
<reference key="1">
    <citation type="journal article" date="2002" name="Gene">
        <title>Pore membrane and/or filament interacting like protein 1 (POMFIL1) is predominantly expressed in the nervous system and encodes different protein isoforms.</title>
        <authorList>
            <person name="Coy J.F."/>
            <person name="Wiemann S."/>
            <person name="Bechmann I."/>
            <person name="Baechner D."/>
            <person name="Nitsch R."/>
            <person name="Kretz O."/>
            <person name="Christiansen H."/>
            <person name="Poustka A."/>
        </authorList>
    </citation>
    <scope>NUCLEOTIDE SEQUENCE [MRNA] (ISOFORM 1)</scope>
    <scope>TISSUE SPECIFICITY</scope>
    <scope>DEVELOPMENTAL STAGE</scope>
</reference>
<reference key="2">
    <citation type="journal article" date="2002" name="Genomics">
        <title>Neuron navigator: a human gene family with homology to unc-53, a cell guidance gene from Caenorhabditis elegans.</title>
        <authorList>
            <person name="Maes T."/>
            <person name="Barcelo A."/>
            <person name="Buesa C."/>
        </authorList>
    </citation>
    <scope>NUCLEOTIDE SEQUENCE [MRNA] (ISOFORM 1)</scope>
    <scope>VARIANT LEU-1273</scope>
    <scope>TISSUE SPECIFICITY</scope>
</reference>
<reference key="3">
    <citation type="journal article" date="2006" name="Nature">
        <title>The DNA sequence and biological annotation of human chromosome 1.</title>
        <authorList>
            <person name="Gregory S.G."/>
            <person name="Barlow K.F."/>
            <person name="McLay K.E."/>
            <person name="Kaul R."/>
            <person name="Swarbreck D."/>
            <person name="Dunham A."/>
            <person name="Scott C.E."/>
            <person name="Howe K.L."/>
            <person name="Woodfine K."/>
            <person name="Spencer C.C.A."/>
            <person name="Jones M.C."/>
            <person name="Gillson C."/>
            <person name="Searle S."/>
            <person name="Zhou Y."/>
            <person name="Kokocinski F."/>
            <person name="McDonald L."/>
            <person name="Evans R."/>
            <person name="Phillips K."/>
            <person name="Atkinson A."/>
            <person name="Cooper R."/>
            <person name="Jones C."/>
            <person name="Hall R.E."/>
            <person name="Andrews T.D."/>
            <person name="Lloyd C."/>
            <person name="Ainscough R."/>
            <person name="Almeida J.P."/>
            <person name="Ambrose K.D."/>
            <person name="Anderson F."/>
            <person name="Andrew R.W."/>
            <person name="Ashwell R.I.S."/>
            <person name="Aubin K."/>
            <person name="Babbage A.K."/>
            <person name="Bagguley C.L."/>
            <person name="Bailey J."/>
            <person name="Beasley H."/>
            <person name="Bethel G."/>
            <person name="Bird C.P."/>
            <person name="Bray-Allen S."/>
            <person name="Brown J.Y."/>
            <person name="Brown A.J."/>
            <person name="Buckley D."/>
            <person name="Burton J."/>
            <person name="Bye J."/>
            <person name="Carder C."/>
            <person name="Chapman J.C."/>
            <person name="Clark S.Y."/>
            <person name="Clarke G."/>
            <person name="Clee C."/>
            <person name="Cobley V."/>
            <person name="Collier R.E."/>
            <person name="Corby N."/>
            <person name="Coville G.J."/>
            <person name="Davies J."/>
            <person name="Deadman R."/>
            <person name="Dunn M."/>
            <person name="Earthrowl M."/>
            <person name="Ellington A.G."/>
            <person name="Errington H."/>
            <person name="Frankish A."/>
            <person name="Frankland J."/>
            <person name="French L."/>
            <person name="Garner P."/>
            <person name="Garnett J."/>
            <person name="Gay L."/>
            <person name="Ghori M.R.J."/>
            <person name="Gibson R."/>
            <person name="Gilby L.M."/>
            <person name="Gillett W."/>
            <person name="Glithero R.J."/>
            <person name="Grafham D.V."/>
            <person name="Griffiths C."/>
            <person name="Griffiths-Jones S."/>
            <person name="Grocock R."/>
            <person name="Hammond S."/>
            <person name="Harrison E.S.I."/>
            <person name="Hart E."/>
            <person name="Haugen E."/>
            <person name="Heath P.D."/>
            <person name="Holmes S."/>
            <person name="Holt K."/>
            <person name="Howden P.J."/>
            <person name="Hunt A.R."/>
            <person name="Hunt S.E."/>
            <person name="Hunter G."/>
            <person name="Isherwood J."/>
            <person name="James R."/>
            <person name="Johnson C."/>
            <person name="Johnson D."/>
            <person name="Joy A."/>
            <person name="Kay M."/>
            <person name="Kershaw J.K."/>
            <person name="Kibukawa M."/>
            <person name="Kimberley A.M."/>
            <person name="King A."/>
            <person name="Knights A.J."/>
            <person name="Lad H."/>
            <person name="Laird G."/>
            <person name="Lawlor S."/>
            <person name="Leongamornlert D.A."/>
            <person name="Lloyd D.M."/>
            <person name="Loveland J."/>
            <person name="Lovell J."/>
            <person name="Lush M.J."/>
            <person name="Lyne R."/>
            <person name="Martin S."/>
            <person name="Mashreghi-Mohammadi M."/>
            <person name="Matthews L."/>
            <person name="Matthews N.S.W."/>
            <person name="McLaren S."/>
            <person name="Milne S."/>
            <person name="Mistry S."/>
            <person name="Moore M.J.F."/>
            <person name="Nickerson T."/>
            <person name="O'Dell C.N."/>
            <person name="Oliver K."/>
            <person name="Palmeiri A."/>
            <person name="Palmer S.A."/>
            <person name="Parker A."/>
            <person name="Patel D."/>
            <person name="Pearce A.V."/>
            <person name="Peck A.I."/>
            <person name="Pelan S."/>
            <person name="Phelps K."/>
            <person name="Phillimore B.J."/>
            <person name="Plumb R."/>
            <person name="Rajan J."/>
            <person name="Raymond C."/>
            <person name="Rouse G."/>
            <person name="Saenphimmachak C."/>
            <person name="Sehra H.K."/>
            <person name="Sheridan E."/>
            <person name="Shownkeen R."/>
            <person name="Sims S."/>
            <person name="Skuce C.D."/>
            <person name="Smith M."/>
            <person name="Steward C."/>
            <person name="Subramanian S."/>
            <person name="Sycamore N."/>
            <person name="Tracey A."/>
            <person name="Tromans A."/>
            <person name="Van Helmond Z."/>
            <person name="Wall M."/>
            <person name="Wallis J.M."/>
            <person name="White S."/>
            <person name="Whitehead S.L."/>
            <person name="Wilkinson J.E."/>
            <person name="Willey D.L."/>
            <person name="Williams H."/>
            <person name="Wilming L."/>
            <person name="Wray P.W."/>
            <person name="Wu Z."/>
            <person name="Coulson A."/>
            <person name="Vaudin M."/>
            <person name="Sulston J.E."/>
            <person name="Durbin R.M."/>
            <person name="Hubbard T."/>
            <person name="Wooster R."/>
            <person name="Dunham I."/>
            <person name="Carter N.P."/>
            <person name="McVean G."/>
            <person name="Ross M.T."/>
            <person name="Harrow J."/>
            <person name="Olson M.V."/>
            <person name="Beck S."/>
            <person name="Rogers J."/>
            <person name="Bentley D.R."/>
        </authorList>
    </citation>
    <scope>NUCLEOTIDE SEQUENCE [LARGE SCALE GENOMIC DNA]</scope>
</reference>
<reference key="4">
    <citation type="journal article" date="2004" name="Brain Res. Dev. Brain Res.">
        <title>Sensory deficits in mice hypomorphic for a mammalian homologue of unc-53.</title>
        <authorList>
            <person name="Peeters P.J."/>
            <person name="Baker A."/>
            <person name="Goris I."/>
            <person name="Daneels G."/>
            <person name="Verhasselt P."/>
            <person name="Luyten W.H.M.L."/>
            <person name="Geysen J.J.G.H."/>
            <person name="Kass S.U."/>
            <person name="Moechars D.W.E."/>
        </authorList>
    </citation>
    <scope>NUCLEOTIDE SEQUENCE [GENOMIC DNA] OF 1-409</scope>
    <scope>NUCLEOTIDE SEQUENCE [MRNA] OF 42-1877 (ISOFORM 1)</scope>
</reference>
<reference key="5">
    <citation type="journal article" date="1999" name="DNA Res.">
        <title>Characterization of cDNA clones selected by the GeneMark analysis from size-fractionated cDNA libraries from human brain.</title>
        <authorList>
            <person name="Hirosawa M."/>
            <person name="Nagase T."/>
            <person name="Ishikawa K."/>
            <person name="Kikuno R."/>
            <person name="Nomura N."/>
            <person name="Ohara O."/>
        </authorList>
    </citation>
    <scope>NUCLEOTIDE SEQUENCE [LARGE SCALE MRNA] OF 108-1877 (ISOFORM 1)</scope>
    <scope>NUCLEOTIDE SEQUENCE [LARGE SCALE MRNA] OF 707-1877 (ISOFORM 6)</scope>
    <source>
        <tissue>Brain</tissue>
    </source>
</reference>
<reference key="6">
    <citation type="journal article" date="2004" name="Nat. Genet.">
        <title>Complete sequencing and characterization of 21,243 full-length human cDNAs.</title>
        <authorList>
            <person name="Ota T."/>
            <person name="Suzuki Y."/>
            <person name="Nishikawa T."/>
            <person name="Otsuki T."/>
            <person name="Sugiyama T."/>
            <person name="Irie R."/>
            <person name="Wakamatsu A."/>
            <person name="Hayashi K."/>
            <person name="Sato H."/>
            <person name="Nagai K."/>
            <person name="Kimura K."/>
            <person name="Makita H."/>
            <person name="Sekine M."/>
            <person name="Obayashi M."/>
            <person name="Nishi T."/>
            <person name="Shibahara T."/>
            <person name="Tanaka T."/>
            <person name="Ishii S."/>
            <person name="Yamamoto J."/>
            <person name="Saito K."/>
            <person name="Kawai Y."/>
            <person name="Isono Y."/>
            <person name="Nakamura Y."/>
            <person name="Nagahari K."/>
            <person name="Murakami K."/>
            <person name="Yasuda T."/>
            <person name="Iwayanagi T."/>
            <person name="Wagatsuma M."/>
            <person name="Shiratori A."/>
            <person name="Sudo H."/>
            <person name="Hosoiri T."/>
            <person name="Kaku Y."/>
            <person name="Kodaira H."/>
            <person name="Kondo H."/>
            <person name="Sugawara M."/>
            <person name="Takahashi M."/>
            <person name="Kanda K."/>
            <person name="Yokoi T."/>
            <person name="Furuya T."/>
            <person name="Kikkawa E."/>
            <person name="Omura Y."/>
            <person name="Abe K."/>
            <person name="Kamihara K."/>
            <person name="Katsuta N."/>
            <person name="Sato K."/>
            <person name="Tanikawa M."/>
            <person name="Yamazaki M."/>
            <person name="Ninomiya K."/>
            <person name="Ishibashi T."/>
            <person name="Yamashita H."/>
            <person name="Murakawa K."/>
            <person name="Fujimori K."/>
            <person name="Tanai H."/>
            <person name="Kimata M."/>
            <person name="Watanabe M."/>
            <person name="Hiraoka S."/>
            <person name="Chiba Y."/>
            <person name="Ishida S."/>
            <person name="Ono Y."/>
            <person name="Takiguchi S."/>
            <person name="Watanabe S."/>
            <person name="Yosida M."/>
            <person name="Hotuta T."/>
            <person name="Kusano J."/>
            <person name="Kanehori K."/>
            <person name="Takahashi-Fujii A."/>
            <person name="Hara H."/>
            <person name="Tanase T.-O."/>
            <person name="Nomura Y."/>
            <person name="Togiya S."/>
            <person name="Komai F."/>
            <person name="Hara R."/>
            <person name="Takeuchi K."/>
            <person name="Arita M."/>
            <person name="Imose N."/>
            <person name="Musashino K."/>
            <person name="Yuuki H."/>
            <person name="Oshima A."/>
            <person name="Sasaki N."/>
            <person name="Aotsuka S."/>
            <person name="Yoshikawa Y."/>
            <person name="Matsunawa H."/>
            <person name="Ichihara T."/>
            <person name="Shiohata N."/>
            <person name="Sano S."/>
            <person name="Moriya S."/>
            <person name="Momiyama H."/>
            <person name="Satoh N."/>
            <person name="Takami S."/>
            <person name="Terashima Y."/>
            <person name="Suzuki O."/>
            <person name="Nakagawa S."/>
            <person name="Senoh A."/>
            <person name="Mizoguchi H."/>
            <person name="Goto Y."/>
            <person name="Shimizu F."/>
            <person name="Wakebe H."/>
            <person name="Hishigaki H."/>
            <person name="Watanabe T."/>
            <person name="Sugiyama A."/>
            <person name="Takemoto M."/>
            <person name="Kawakami B."/>
            <person name="Yamazaki M."/>
            <person name="Watanabe K."/>
            <person name="Kumagai A."/>
            <person name="Itakura S."/>
            <person name="Fukuzumi Y."/>
            <person name="Fujimori Y."/>
            <person name="Komiyama M."/>
            <person name="Tashiro H."/>
            <person name="Tanigami A."/>
            <person name="Fujiwara T."/>
            <person name="Ono T."/>
            <person name="Yamada K."/>
            <person name="Fujii Y."/>
            <person name="Ozaki K."/>
            <person name="Hirao M."/>
            <person name="Ohmori Y."/>
            <person name="Kawabata A."/>
            <person name="Hikiji T."/>
            <person name="Kobatake N."/>
            <person name="Inagaki H."/>
            <person name="Ikema Y."/>
            <person name="Okamoto S."/>
            <person name="Okitani R."/>
            <person name="Kawakami T."/>
            <person name="Noguchi S."/>
            <person name="Itoh T."/>
            <person name="Shigeta K."/>
            <person name="Senba T."/>
            <person name="Matsumura K."/>
            <person name="Nakajima Y."/>
            <person name="Mizuno T."/>
            <person name="Morinaga M."/>
            <person name="Sasaki M."/>
            <person name="Togashi T."/>
            <person name="Oyama M."/>
            <person name="Hata H."/>
            <person name="Watanabe M."/>
            <person name="Komatsu T."/>
            <person name="Mizushima-Sugano J."/>
            <person name="Satoh T."/>
            <person name="Shirai Y."/>
            <person name="Takahashi Y."/>
            <person name="Nakagawa K."/>
            <person name="Okumura K."/>
            <person name="Nagase T."/>
            <person name="Nomura N."/>
            <person name="Kikuchi H."/>
            <person name="Masuho Y."/>
            <person name="Yamashita R."/>
            <person name="Nakai K."/>
            <person name="Yada T."/>
            <person name="Nakamura Y."/>
            <person name="Ohara O."/>
            <person name="Isogai T."/>
            <person name="Sugano S."/>
        </authorList>
    </citation>
    <scope>NUCLEOTIDE SEQUENCE [LARGE SCALE MRNA] OF 445-1205 (ISOFORM 2)</scope>
    <scope>NUCLEOTIDE SEQUENCE [LARGE SCALE MRNA] OF 1161-1877 (ISOFORM 3)</scope>
</reference>
<reference key="7">
    <citation type="journal article" date="2004" name="Genome Res.">
        <title>The status, quality, and expansion of the NIH full-length cDNA project: the Mammalian Gene Collection (MGC).</title>
        <authorList>
            <consortium name="The MGC Project Team"/>
        </authorList>
    </citation>
    <scope>NUCLEOTIDE SEQUENCE [LARGE SCALE MRNA] OF 1122-1877 (ISOFORM 3)</scope>
    <source>
        <tissue>Skin</tissue>
    </source>
</reference>
<reference key="8">
    <citation type="journal article" date="2008" name="Proc. Natl. Acad. Sci. U.S.A.">
        <title>A quantitative atlas of mitotic phosphorylation.</title>
        <authorList>
            <person name="Dephoure N."/>
            <person name="Zhou C."/>
            <person name="Villen J."/>
            <person name="Beausoleil S.A."/>
            <person name="Bakalarski C.E."/>
            <person name="Elledge S.J."/>
            <person name="Gygi S.P."/>
        </authorList>
    </citation>
    <scope>PHOSPHORYLATION [LARGE SCALE ANALYSIS] AT SER-152; THR-159; SER-199; SER-296; SER-308; SER-391; SER-452; THR-534; THR-572; SER-760; SER-808; THR-1170; SER-1181 AND SER-1382</scope>
    <scope>IDENTIFICATION BY MASS SPECTROMETRY [LARGE SCALE ANALYSIS]</scope>
    <source>
        <tissue>Cervix carcinoma</tissue>
    </source>
</reference>
<reference key="9">
    <citation type="journal article" date="2009" name="Anal. Chem.">
        <title>Lys-N and trypsin cover complementary parts of the phosphoproteome in a refined SCX-based approach.</title>
        <authorList>
            <person name="Gauci S."/>
            <person name="Helbig A.O."/>
            <person name="Slijper M."/>
            <person name="Krijgsveld J."/>
            <person name="Heck A.J."/>
            <person name="Mohammed S."/>
        </authorList>
    </citation>
    <scope>IDENTIFICATION BY MASS SPECTROMETRY [LARGE SCALE ANALYSIS]</scope>
</reference>
<reference key="10">
    <citation type="journal article" date="2009" name="Mol. Cell. Proteomics">
        <title>Large-scale proteomics analysis of the human kinome.</title>
        <authorList>
            <person name="Oppermann F.S."/>
            <person name="Gnad F."/>
            <person name="Olsen J.V."/>
            <person name="Hornberger R."/>
            <person name="Greff Z."/>
            <person name="Keri G."/>
            <person name="Mann M."/>
            <person name="Daub H."/>
        </authorList>
    </citation>
    <scope>PHOSPHORYLATION [LARGE SCALE ANALYSIS] AT SER-750</scope>
    <scope>IDENTIFICATION BY MASS SPECTROMETRY [LARGE SCALE ANALYSIS]</scope>
</reference>
<reference key="11">
    <citation type="journal article" date="2010" name="Sci. Signal.">
        <title>Quantitative phosphoproteomics reveals widespread full phosphorylation site occupancy during mitosis.</title>
        <authorList>
            <person name="Olsen J.V."/>
            <person name="Vermeulen M."/>
            <person name="Santamaria A."/>
            <person name="Kumar C."/>
            <person name="Miller M.L."/>
            <person name="Jensen L.J."/>
            <person name="Gnad F."/>
            <person name="Cox J."/>
            <person name="Jensen T.S."/>
            <person name="Nigg E.A."/>
            <person name="Brunak S."/>
            <person name="Mann M."/>
        </authorList>
    </citation>
    <scope>PHOSPHORYLATION [LARGE SCALE ANALYSIS] AT SER-90; SER-362; SER-452; SER-808; SER-1000; THR-1006 AND SER-1265</scope>
    <scope>IDENTIFICATION BY MASS SPECTROMETRY [LARGE SCALE ANALYSIS]</scope>
    <source>
        <tissue>Cervix carcinoma</tissue>
    </source>
</reference>
<reference key="12">
    <citation type="journal article" date="2011" name="BMC Syst. Biol.">
        <title>Initial characterization of the human central proteome.</title>
        <authorList>
            <person name="Burkard T.R."/>
            <person name="Planyavsky M."/>
            <person name="Kaupe I."/>
            <person name="Breitwieser F.P."/>
            <person name="Buerckstuemmer T."/>
            <person name="Bennett K.L."/>
            <person name="Superti-Furga G."/>
            <person name="Colinge J."/>
        </authorList>
    </citation>
    <scope>IDENTIFICATION BY MASS SPECTROMETRY [LARGE SCALE ANALYSIS]</scope>
</reference>
<reference key="13">
    <citation type="journal article" date="2011" name="Sci. Signal.">
        <title>System-wide temporal characterization of the proteome and phosphoproteome of human embryonic stem cell differentiation.</title>
        <authorList>
            <person name="Rigbolt K.T."/>
            <person name="Prokhorova T.A."/>
            <person name="Akimov V."/>
            <person name="Henningsen J."/>
            <person name="Johansen P.T."/>
            <person name="Kratchmarova I."/>
            <person name="Kassem M."/>
            <person name="Mann M."/>
            <person name="Olsen J.V."/>
            <person name="Blagoev B."/>
        </authorList>
    </citation>
    <scope>PHOSPHORYLATION [LARGE SCALE ANALYSIS] AT SER-90; SER-142 AND SER-760</scope>
    <scope>IDENTIFICATION BY MASS SPECTROMETRY [LARGE SCALE ANALYSIS]</scope>
</reference>
<reference key="14">
    <citation type="journal article" date="2012" name="Proc. Natl. Acad. Sci. U.S.A.">
        <title>N-terminal acetylome analyses and functional insights of the N-terminal acetyltransferase NatB.</title>
        <authorList>
            <person name="Van Damme P."/>
            <person name="Lasa M."/>
            <person name="Polevoda B."/>
            <person name="Gazquez C."/>
            <person name="Elosegui-Artola A."/>
            <person name="Kim D.S."/>
            <person name="De Juan-Pardo E."/>
            <person name="Demeyer K."/>
            <person name="Hole K."/>
            <person name="Larrea E."/>
            <person name="Timmerman E."/>
            <person name="Prieto J."/>
            <person name="Arnesen T."/>
            <person name="Sherman F."/>
            <person name="Gevaert K."/>
            <person name="Aldabe R."/>
        </authorList>
    </citation>
    <scope>ACETYLATION [LARGE SCALE ANALYSIS] AT MET-1</scope>
    <scope>IDENTIFICATION BY MASS SPECTROMETRY [LARGE SCALE ANALYSIS]</scope>
</reference>
<reference key="15">
    <citation type="journal article" date="2013" name="J. Proteome Res.">
        <title>Toward a comprehensive characterization of a human cancer cell phosphoproteome.</title>
        <authorList>
            <person name="Zhou H."/>
            <person name="Di Palma S."/>
            <person name="Preisinger C."/>
            <person name="Peng M."/>
            <person name="Polat A.N."/>
            <person name="Heck A.J."/>
            <person name="Mohammed S."/>
        </authorList>
    </citation>
    <scope>PHOSPHORYLATION [LARGE SCALE ANALYSIS] AT SER-90; SER-142; SER-194; SER-199; SER-312; SER-391; SER-452; SER-474; SER-476; SER-490; SER-528; SER-541; THR-544; SER-648; SER-754; SER-760; SER-797; SER-808; SER-1000 AND SER-1265</scope>
    <scope>IDENTIFICATION BY MASS SPECTROMETRY [LARGE SCALE ANALYSIS]</scope>
    <source>
        <tissue>Erythroleukemia</tissue>
    </source>
</reference>
<reference key="16">
    <citation type="journal article" date="2014" name="J. Proteomics">
        <title>An enzyme assisted RP-RPLC approach for in-depth analysis of human liver phosphoproteome.</title>
        <authorList>
            <person name="Bian Y."/>
            <person name="Song C."/>
            <person name="Cheng K."/>
            <person name="Dong M."/>
            <person name="Wang F."/>
            <person name="Huang J."/>
            <person name="Sun D."/>
            <person name="Wang L."/>
            <person name="Ye M."/>
            <person name="Zou H."/>
        </authorList>
    </citation>
    <scope>IDENTIFICATION BY MASS SPECTROMETRY [LARGE SCALE ANALYSIS]</scope>
    <source>
        <tissue>Liver</tissue>
    </source>
</reference>
<feature type="chain" id="PRO_0000286974" description="Neuron navigator 1">
    <location>
        <begin position="1"/>
        <end position="1877"/>
    </location>
</feature>
<feature type="region of interest" description="Disordered" evidence="4">
    <location>
        <begin position="1"/>
        <end position="59"/>
    </location>
</feature>
<feature type="region of interest" description="Disordered" evidence="4">
    <location>
        <begin position="114"/>
        <end position="225"/>
    </location>
</feature>
<feature type="region of interest" description="Disordered" evidence="4">
    <location>
        <begin position="294"/>
        <end position="336"/>
    </location>
</feature>
<feature type="region of interest" description="Disordered" evidence="4">
    <location>
        <begin position="386"/>
        <end position="839"/>
    </location>
</feature>
<feature type="region of interest" description="Disordered" evidence="4">
    <location>
        <begin position="892"/>
        <end position="989"/>
    </location>
</feature>
<feature type="region of interest" description="Disordered" evidence="4">
    <location>
        <begin position="1172"/>
        <end position="1204"/>
    </location>
</feature>
<feature type="region of interest" description="Disordered" evidence="4">
    <location>
        <begin position="1244"/>
        <end position="1306"/>
    </location>
</feature>
<feature type="region of interest" description="Disordered" evidence="4">
    <location>
        <begin position="1359"/>
        <end position="1383"/>
    </location>
</feature>
<feature type="region of interest" description="Disordered" evidence="4">
    <location>
        <begin position="1810"/>
        <end position="1843"/>
    </location>
</feature>
<feature type="coiled-coil region" evidence="3">
    <location>
        <begin position="255"/>
        <end position="280"/>
    </location>
</feature>
<feature type="coiled-coil region" evidence="3">
    <location>
        <begin position="731"/>
        <end position="756"/>
    </location>
</feature>
<feature type="coiled-coil region" evidence="3">
    <location>
        <begin position="1072"/>
        <end position="1163"/>
    </location>
</feature>
<feature type="coiled-coil region" evidence="3">
    <location>
        <begin position="1303"/>
        <end position="1362"/>
    </location>
</feature>
<feature type="compositionally biased region" description="Low complexity" evidence="4">
    <location>
        <begin position="32"/>
        <end position="41"/>
    </location>
</feature>
<feature type="compositionally biased region" description="Low complexity" evidence="4">
    <location>
        <begin position="205"/>
        <end position="214"/>
    </location>
</feature>
<feature type="compositionally biased region" description="Low complexity" evidence="4">
    <location>
        <begin position="301"/>
        <end position="315"/>
    </location>
</feature>
<feature type="compositionally biased region" description="Low complexity" evidence="4">
    <location>
        <begin position="411"/>
        <end position="425"/>
    </location>
</feature>
<feature type="compositionally biased region" description="Low complexity" evidence="4">
    <location>
        <begin position="433"/>
        <end position="448"/>
    </location>
</feature>
<feature type="compositionally biased region" description="Basic and acidic residues" evidence="4">
    <location>
        <begin position="476"/>
        <end position="486"/>
    </location>
</feature>
<feature type="compositionally biased region" description="Basic and acidic residues" evidence="4">
    <location>
        <begin position="503"/>
        <end position="519"/>
    </location>
</feature>
<feature type="compositionally biased region" description="Basic and acidic residues" evidence="4">
    <location>
        <begin position="555"/>
        <end position="566"/>
    </location>
</feature>
<feature type="compositionally biased region" description="Basic and acidic residues" evidence="4">
    <location>
        <begin position="581"/>
        <end position="591"/>
    </location>
</feature>
<feature type="compositionally biased region" description="Polar residues" evidence="4">
    <location>
        <begin position="615"/>
        <end position="635"/>
    </location>
</feature>
<feature type="compositionally biased region" description="Polar residues" evidence="4">
    <location>
        <begin position="645"/>
        <end position="655"/>
    </location>
</feature>
<feature type="compositionally biased region" description="Polar residues" evidence="4">
    <location>
        <begin position="698"/>
        <end position="710"/>
    </location>
</feature>
<feature type="compositionally biased region" description="Polar residues" evidence="4">
    <location>
        <begin position="724"/>
        <end position="733"/>
    </location>
</feature>
<feature type="compositionally biased region" description="Polar residues" evidence="4">
    <location>
        <begin position="751"/>
        <end position="773"/>
    </location>
</feature>
<feature type="compositionally biased region" description="Low complexity" evidence="4">
    <location>
        <begin position="805"/>
        <end position="818"/>
    </location>
</feature>
<feature type="compositionally biased region" description="Pro residues" evidence="4">
    <location>
        <begin position="902"/>
        <end position="913"/>
    </location>
</feature>
<feature type="compositionally biased region" description="Low complexity" evidence="4">
    <location>
        <begin position="1181"/>
        <end position="1200"/>
    </location>
</feature>
<feature type="compositionally biased region" description="Polar residues" evidence="4">
    <location>
        <begin position="1246"/>
        <end position="1264"/>
    </location>
</feature>
<feature type="compositionally biased region" description="Low complexity" evidence="4">
    <location>
        <begin position="1265"/>
        <end position="1275"/>
    </location>
</feature>
<feature type="compositionally biased region" description="Polar residues" evidence="4">
    <location>
        <begin position="1366"/>
        <end position="1383"/>
    </location>
</feature>
<feature type="modified residue" description="N-acetylmethionine" evidence="15">
    <location>
        <position position="1"/>
    </location>
</feature>
<feature type="modified residue" description="Phosphoserine" evidence="13 14 16">
    <location>
        <position position="90"/>
    </location>
</feature>
<feature type="modified residue" description="Phosphoserine" evidence="14 16">
    <location>
        <position position="142"/>
    </location>
</feature>
<feature type="modified residue" description="Phosphoserine" evidence="11">
    <location>
        <position position="152"/>
    </location>
</feature>
<feature type="modified residue" description="Phosphothreonine" evidence="11">
    <location>
        <position position="159"/>
    </location>
</feature>
<feature type="modified residue" description="Phosphoserine" evidence="16">
    <location>
        <position position="194"/>
    </location>
</feature>
<feature type="modified residue" description="Phosphoserine" evidence="11 16">
    <location>
        <position position="199"/>
    </location>
</feature>
<feature type="modified residue" description="Phosphoserine" evidence="11">
    <location>
        <position position="296"/>
    </location>
</feature>
<feature type="modified residue" description="Phosphoserine" evidence="11">
    <location>
        <position position="308"/>
    </location>
</feature>
<feature type="modified residue" description="Phosphoserine" evidence="16">
    <location>
        <position position="312"/>
    </location>
</feature>
<feature type="modified residue" description="Phosphoserine" evidence="13">
    <location>
        <position position="362"/>
    </location>
</feature>
<feature type="modified residue" description="Phosphoserine" evidence="11 16">
    <location>
        <position position="391"/>
    </location>
</feature>
<feature type="modified residue" description="Phosphoserine" evidence="11 13 16">
    <location>
        <position position="452"/>
    </location>
</feature>
<feature type="modified residue" description="Phosphoserine" evidence="16">
    <location>
        <position position="474"/>
    </location>
</feature>
<feature type="modified residue" description="Phosphoserine" evidence="16">
    <location>
        <position position="476"/>
    </location>
</feature>
<feature type="modified residue" description="Phosphoserine" evidence="16">
    <location>
        <position position="490"/>
    </location>
</feature>
<feature type="modified residue" description="Phosphoserine" evidence="16">
    <location>
        <position position="528"/>
    </location>
</feature>
<feature type="modified residue" description="Phosphothreonine" evidence="11">
    <location>
        <position position="534"/>
    </location>
</feature>
<feature type="modified residue" description="Phosphoserine" evidence="16">
    <location>
        <position position="541"/>
    </location>
</feature>
<feature type="modified residue" description="Phosphothreonine" evidence="16">
    <location>
        <position position="544"/>
    </location>
</feature>
<feature type="modified residue" description="Phosphothreonine" evidence="11">
    <location>
        <position position="572"/>
    </location>
</feature>
<feature type="modified residue" description="Phosphoserine" evidence="16">
    <location>
        <position position="648"/>
    </location>
</feature>
<feature type="modified residue" description="Omega-N-methylarginine" evidence="2">
    <location>
        <position position="688"/>
    </location>
</feature>
<feature type="modified residue" description="Phosphoserine" evidence="12">
    <location>
        <position position="750"/>
    </location>
</feature>
<feature type="modified residue" description="Phosphoserine" evidence="16">
    <location>
        <position position="754"/>
    </location>
</feature>
<feature type="modified residue" description="Phosphoserine" evidence="11 14 16">
    <location>
        <position position="760"/>
    </location>
</feature>
<feature type="modified residue" description="Phosphoserine" evidence="16">
    <location>
        <position position="797"/>
    </location>
</feature>
<feature type="modified residue" description="Phosphoserine" evidence="11 13 16">
    <location>
        <position position="808"/>
    </location>
</feature>
<feature type="modified residue" description="Phosphoserine" evidence="13 16">
    <location>
        <position position="1000"/>
    </location>
</feature>
<feature type="modified residue" description="Phosphothreonine" evidence="13">
    <location>
        <position position="1006"/>
    </location>
</feature>
<feature type="modified residue" description="Phosphothreonine" evidence="11">
    <location>
        <position position="1170"/>
    </location>
</feature>
<feature type="modified residue" description="Phosphoserine" evidence="11">
    <location>
        <position position="1181"/>
    </location>
</feature>
<feature type="modified residue" description="Phosphoserine" evidence="13 16">
    <location>
        <position position="1265"/>
    </location>
</feature>
<feature type="modified residue" description="Phosphoserine" evidence="11">
    <location>
        <position position="1382"/>
    </location>
</feature>
<feature type="splice variant" id="VSP_025253" description="In isoform 5." evidence="10">
    <location>
        <begin position="1"/>
        <end position="389"/>
    </location>
</feature>
<feature type="splice variant" id="VSP_025254" description="In isoform 5." evidence="10">
    <original>MSDSDLMGKTMTEDDDITTG</original>
    <variation>MLHLPLPRSGRTVNFPRS</variation>
    <location>
        <begin position="390"/>
        <end position="409"/>
    </location>
</feature>
<feature type="splice variant" id="VSP_025255" description="In isoform 4 and isoform 7." evidence="10">
    <location>
        <begin position="999"/>
        <end position="1055"/>
    </location>
</feature>
<feature type="splice variant" id="VSP_025256" description="In isoform 2, isoform 6 and isoform 7." evidence="7 8">
    <location>
        <begin position="1074"/>
        <end position="1081"/>
    </location>
</feature>
<feature type="splice variant" id="VSP_025257" description="In isoform 6." evidence="7">
    <original>ELRIKRQNSSDSISSLNSITSHSSIG</original>
    <variation>GRTSSHRLRGNREQESKSITDFYLGP</variation>
    <location>
        <begin position="1173"/>
        <end position="1198"/>
    </location>
</feature>
<feature type="splice variant" id="VSP_025258" description="In isoform 6." evidence="7">
    <location>
        <begin position="1199"/>
        <end position="1877"/>
    </location>
</feature>
<feature type="splice variant" id="VSP_025259" description="In isoform 3, isoform 4, isoform 5 and isoform 7." evidence="8 9">
    <location>
        <begin position="1214"/>
        <end position="1216"/>
    </location>
</feature>
<feature type="sequence variant" id="VAR_032245" description="In dbSNP:rs16849342.">
    <original>Q</original>
    <variation>H</variation>
    <location>
        <position position="937"/>
    </location>
</feature>
<feature type="sequence variant" id="VAR_032246" description="In dbSNP:rs2820289." evidence="6">
    <original>S</original>
    <variation>L</variation>
    <location>
        <position position="1273"/>
    </location>
</feature>
<feature type="sequence variant" id="VAR_032247" description="In dbSNP:rs2292822.">
    <original>H</original>
    <variation>D</variation>
    <location>
        <position position="1290"/>
    </location>
</feature>
<feature type="sequence variant" id="VAR_032248" description="In dbSNP:rs16849379.">
    <original>V</original>
    <variation>I</variation>
    <location>
        <position position="1527"/>
    </location>
</feature>
<feature type="sequence conflict" description="In Ref. 5; BAA86465." evidence="10" ref="5">
    <original>DLR</original>
    <variation>FLW</variation>
    <location>
        <begin position="267"/>
        <end position="269"/>
    </location>
</feature>
<feature type="sequence conflict" description="In Ref. 2; AAL05591." evidence="10" ref="2">
    <original>S</original>
    <variation>R</variation>
    <location>
        <position position="417"/>
    </location>
</feature>
<feature type="sequence conflict" description="In Ref. 6; BAB14142." evidence="10" ref="6">
    <original>C</original>
    <variation>R</variation>
    <location>
        <position position="508"/>
    </location>
</feature>
<feature type="sequence conflict" description="In Ref. 6; BAB14142." evidence="10" ref="6">
    <original>S</original>
    <variation>P</variation>
    <location>
        <position position="964"/>
    </location>
</feature>
<feature type="sequence conflict" description="In Ref. 6; BAB14142." evidence="10" ref="6">
    <original>S</original>
    <variation>L</variation>
    <location>
        <position position="1092"/>
    </location>
</feature>
<feature type="sequence conflict" description="In Ref. 6; BAB14142." evidence="10" ref="6">
    <original>N</original>
    <variation>S</variation>
    <location>
        <position position="1109"/>
    </location>
</feature>
<feature type="sequence conflict" description="In Ref. 6; BAB14865." evidence="10" ref="6">
    <original>E</original>
    <variation>K</variation>
    <location>
        <position position="1793"/>
    </location>
</feature>
<protein>
    <recommendedName>
        <fullName>Neuron navigator 1</fullName>
    </recommendedName>
    <alternativeName>
        <fullName>Pore membrane and/or filament-interacting-like protein 3</fullName>
    </alternativeName>
    <alternativeName>
        <fullName>Steerin-1</fullName>
    </alternativeName>
    <alternativeName>
        <fullName>Unc-53 homolog 1</fullName>
        <shortName>unc53H1</shortName>
    </alternativeName>
</protein>
<evidence type="ECO:0000250" key="1"/>
<evidence type="ECO:0000250" key="2">
    <source>
        <dbReference type="UniProtKB" id="Q8CH77"/>
    </source>
</evidence>
<evidence type="ECO:0000255" key="3"/>
<evidence type="ECO:0000256" key="4">
    <source>
        <dbReference type="SAM" id="MobiDB-lite"/>
    </source>
</evidence>
<evidence type="ECO:0000269" key="5">
    <source>
    </source>
</evidence>
<evidence type="ECO:0000269" key="6">
    <source>
    </source>
</evidence>
<evidence type="ECO:0000303" key="7">
    <source>
    </source>
</evidence>
<evidence type="ECO:0000303" key="8">
    <source>
    </source>
</evidence>
<evidence type="ECO:0000303" key="9">
    <source>
    </source>
</evidence>
<evidence type="ECO:0000305" key="10"/>
<evidence type="ECO:0007744" key="11">
    <source>
    </source>
</evidence>
<evidence type="ECO:0007744" key="12">
    <source>
    </source>
</evidence>
<evidence type="ECO:0007744" key="13">
    <source>
    </source>
</evidence>
<evidence type="ECO:0007744" key="14">
    <source>
    </source>
</evidence>
<evidence type="ECO:0007744" key="15">
    <source>
    </source>
</evidence>
<evidence type="ECO:0007744" key="16">
    <source>
    </source>
</evidence>
<dbReference type="EMBL" id="AY043013">
    <property type="protein sequence ID" value="AAL05591.1"/>
    <property type="molecule type" value="mRNA"/>
</dbReference>
<dbReference type="EMBL" id="AC092800">
    <property type="status" value="NOT_ANNOTATED_CDS"/>
    <property type="molecule type" value="Genomic_DNA"/>
</dbReference>
<dbReference type="EMBL" id="AL512788">
    <property type="status" value="NOT_ANNOTATED_CDS"/>
    <property type="molecule type" value="Genomic_DNA"/>
</dbReference>
<dbReference type="EMBL" id="AL645504">
    <property type="status" value="NOT_ANNOTATED_CDS"/>
    <property type="molecule type" value="Genomic_DNA"/>
</dbReference>
<dbReference type="EMBL" id="AC096677">
    <property type="status" value="NOT_ANNOTATED_CDS"/>
    <property type="molecule type" value="Genomic_DNA"/>
</dbReference>
<dbReference type="EMBL" id="AJ251973">
    <property type="protein sequence ID" value="CAB66088.1"/>
    <property type="molecule type" value="Genomic_DNA"/>
</dbReference>
<dbReference type="EMBL" id="AJ488101">
    <property type="protein sequence ID" value="CAD32470.1"/>
    <property type="molecule type" value="mRNA"/>
</dbReference>
<dbReference type="EMBL" id="AB032977">
    <property type="protein sequence ID" value="BAA86465.3"/>
    <property type="molecule type" value="mRNA"/>
</dbReference>
<dbReference type="EMBL" id="AB033039">
    <property type="protein sequence ID" value="BAA86527.1"/>
    <property type="molecule type" value="mRNA"/>
</dbReference>
<dbReference type="EMBL" id="AK022622">
    <property type="protein sequence ID" value="BAB14136.1"/>
    <property type="status" value="ALT_INIT"/>
    <property type="molecule type" value="mRNA"/>
</dbReference>
<dbReference type="EMBL" id="AK022631">
    <property type="protein sequence ID" value="BAB14142.1"/>
    <property type="status" value="ALT_INIT"/>
    <property type="molecule type" value="mRNA"/>
</dbReference>
<dbReference type="EMBL" id="AK024265">
    <property type="protein sequence ID" value="BAB14865.1"/>
    <property type="status" value="ALT_INIT"/>
    <property type="molecule type" value="mRNA"/>
</dbReference>
<dbReference type="EMBL" id="BC007523">
    <property type="protein sequence ID" value="AAH07523.1"/>
    <property type="status" value="ALT_INIT"/>
    <property type="molecule type" value="mRNA"/>
</dbReference>
<dbReference type="CCDS" id="CCDS1414.2">
    <molecule id="Q8NEY1-1"/>
</dbReference>
<dbReference type="CCDS" id="CCDS53456.1">
    <molecule id="Q8NEY1-5"/>
</dbReference>
<dbReference type="RefSeq" id="NP_001161210.1">
    <molecule id="Q8NEY1-5"/>
    <property type="nucleotide sequence ID" value="NM_001167738.2"/>
</dbReference>
<dbReference type="RefSeq" id="NP_065176.3">
    <molecule id="Q8NEY1-1"/>
    <property type="nucleotide sequence ID" value="NM_020443.4"/>
</dbReference>
<dbReference type="RefSeq" id="XP_011508399.1">
    <property type="nucleotide sequence ID" value="XM_011510097.1"/>
</dbReference>
<dbReference type="RefSeq" id="XP_011508400.1">
    <property type="nucleotide sequence ID" value="XM_011510098.1"/>
</dbReference>
<dbReference type="RefSeq" id="XP_011508404.1">
    <property type="nucleotide sequence ID" value="XM_011510102.1"/>
</dbReference>
<dbReference type="RefSeq" id="XP_016858240.1">
    <property type="nucleotide sequence ID" value="XM_017002751.1"/>
</dbReference>
<dbReference type="BioGRID" id="124605">
    <property type="interactions" value="160"/>
</dbReference>
<dbReference type="FunCoup" id="Q8NEY1">
    <property type="interactions" value="598"/>
</dbReference>
<dbReference type="IntAct" id="Q8NEY1">
    <property type="interactions" value="82"/>
</dbReference>
<dbReference type="MINT" id="Q8NEY1"/>
<dbReference type="STRING" id="9606.ENSP00000356265"/>
<dbReference type="CarbonylDB" id="Q8NEY1"/>
<dbReference type="GlyCosmos" id="Q8NEY1">
    <property type="glycosylation" value="1 site, 1 glycan"/>
</dbReference>
<dbReference type="GlyGen" id="Q8NEY1">
    <property type="glycosylation" value="9 sites, 1 O-linked glycan (6 sites)"/>
</dbReference>
<dbReference type="iPTMnet" id="Q8NEY1"/>
<dbReference type="PhosphoSitePlus" id="Q8NEY1"/>
<dbReference type="BioMuta" id="NAV1"/>
<dbReference type="DMDM" id="147704557"/>
<dbReference type="jPOST" id="Q8NEY1"/>
<dbReference type="MassIVE" id="Q8NEY1"/>
<dbReference type="PaxDb" id="9606-ENSP00000356265"/>
<dbReference type="PeptideAtlas" id="Q8NEY1"/>
<dbReference type="ProteomicsDB" id="73230">
    <molecule id="Q8NEY1-1"/>
</dbReference>
<dbReference type="ProteomicsDB" id="73231">
    <molecule id="Q8NEY1-2"/>
</dbReference>
<dbReference type="ProteomicsDB" id="73232">
    <molecule id="Q8NEY1-3"/>
</dbReference>
<dbReference type="ProteomicsDB" id="73233">
    <molecule id="Q8NEY1-4"/>
</dbReference>
<dbReference type="ProteomicsDB" id="73234">
    <molecule id="Q8NEY1-5"/>
</dbReference>
<dbReference type="ProteomicsDB" id="73235">
    <molecule id="Q8NEY1-6"/>
</dbReference>
<dbReference type="ProteomicsDB" id="73236">
    <molecule id="Q8NEY1-7"/>
</dbReference>
<dbReference type="Pumba" id="Q8NEY1"/>
<dbReference type="Antibodypedia" id="3226">
    <property type="antibodies" value="82 antibodies from 22 providers"/>
</dbReference>
<dbReference type="DNASU" id="89796"/>
<dbReference type="Ensembl" id="ENST00000367295.5">
    <molecule id="Q8NEY1-5"/>
    <property type="protein sequence ID" value="ENSP00000356264.1"/>
    <property type="gene ID" value="ENSG00000134369.17"/>
</dbReference>
<dbReference type="Ensembl" id="ENST00000367296.8">
    <molecule id="Q8NEY1-1"/>
    <property type="protein sequence ID" value="ENSP00000356265.4"/>
    <property type="gene ID" value="ENSG00000134369.17"/>
</dbReference>
<dbReference type="GeneID" id="89796"/>
<dbReference type="KEGG" id="hsa:89796"/>
<dbReference type="UCSC" id="uc001gwx.4">
    <molecule id="Q8NEY1-1"/>
    <property type="organism name" value="human"/>
</dbReference>
<dbReference type="AGR" id="HGNC:15989"/>
<dbReference type="CTD" id="89796"/>
<dbReference type="DisGeNET" id="89796"/>
<dbReference type="GeneCards" id="NAV1"/>
<dbReference type="HGNC" id="HGNC:15989">
    <property type="gene designation" value="NAV1"/>
</dbReference>
<dbReference type="HPA" id="ENSG00000134369">
    <property type="expression patterns" value="Low tissue specificity"/>
</dbReference>
<dbReference type="MalaCards" id="NAV1"/>
<dbReference type="MIM" id="611628">
    <property type="type" value="gene"/>
</dbReference>
<dbReference type="neXtProt" id="NX_Q8NEY1"/>
<dbReference type="OpenTargets" id="ENSG00000134369"/>
<dbReference type="PharmGKB" id="PA31451"/>
<dbReference type="VEuPathDB" id="HostDB:ENSG00000134369"/>
<dbReference type="eggNOG" id="ENOG502QSUE">
    <property type="taxonomic scope" value="Eukaryota"/>
</dbReference>
<dbReference type="GeneTree" id="ENSGT00940000156637"/>
<dbReference type="InParanoid" id="Q8NEY1"/>
<dbReference type="OMA" id="DPACDLY"/>
<dbReference type="OrthoDB" id="2161974at2759"/>
<dbReference type="PAN-GO" id="Q8NEY1">
    <property type="GO annotations" value="5 GO annotations based on evolutionary models"/>
</dbReference>
<dbReference type="PhylomeDB" id="Q8NEY1"/>
<dbReference type="TreeFam" id="TF329881"/>
<dbReference type="PathwayCommons" id="Q8NEY1"/>
<dbReference type="SignaLink" id="Q8NEY1"/>
<dbReference type="BioGRID-ORCS" id="89796">
    <property type="hits" value="13 hits in 1156 CRISPR screens"/>
</dbReference>
<dbReference type="ChiTaRS" id="NAV1">
    <property type="organism name" value="human"/>
</dbReference>
<dbReference type="GeneWiki" id="NAV1"/>
<dbReference type="GenomeRNAi" id="89796"/>
<dbReference type="Pharos" id="Q8NEY1">
    <property type="development level" value="Tbio"/>
</dbReference>
<dbReference type="PRO" id="PR:Q8NEY1"/>
<dbReference type="Proteomes" id="UP000005640">
    <property type="component" value="Chromosome 1"/>
</dbReference>
<dbReference type="RNAct" id="Q8NEY1">
    <property type="molecule type" value="protein"/>
</dbReference>
<dbReference type="Bgee" id="ENSG00000134369">
    <property type="expression patterns" value="Expressed in endothelial cell and 192 other cell types or tissues"/>
</dbReference>
<dbReference type="ExpressionAtlas" id="Q8NEY1">
    <property type="expression patterns" value="baseline and differential"/>
</dbReference>
<dbReference type="GO" id="GO:0043194">
    <property type="term" value="C:axon initial segment"/>
    <property type="evidence" value="ECO:0000318"/>
    <property type="project" value="GO_Central"/>
</dbReference>
<dbReference type="GO" id="GO:0005737">
    <property type="term" value="C:cytoplasm"/>
    <property type="evidence" value="ECO:0007669"/>
    <property type="project" value="UniProtKB-KW"/>
</dbReference>
<dbReference type="GO" id="GO:0005874">
    <property type="term" value="C:microtubule"/>
    <property type="evidence" value="ECO:0007669"/>
    <property type="project" value="UniProtKB-KW"/>
</dbReference>
<dbReference type="GO" id="GO:0015630">
    <property type="term" value="C:microtubule cytoskeleton"/>
    <property type="evidence" value="ECO:0000318"/>
    <property type="project" value="GO_Central"/>
</dbReference>
<dbReference type="GO" id="GO:0016887">
    <property type="term" value="F:ATP hydrolysis activity"/>
    <property type="evidence" value="ECO:0007669"/>
    <property type="project" value="InterPro"/>
</dbReference>
<dbReference type="GO" id="GO:0001578">
    <property type="term" value="P:microtubule bundle formation"/>
    <property type="evidence" value="ECO:0000318"/>
    <property type="project" value="GO_Central"/>
</dbReference>
<dbReference type="GO" id="GO:0001764">
    <property type="term" value="P:neuron migration"/>
    <property type="evidence" value="ECO:0000318"/>
    <property type="project" value="GO_Central"/>
</dbReference>
<dbReference type="FunFam" id="3.40.50.300:FF:000409">
    <property type="entry name" value="Neuron navigator 1"/>
    <property type="match status" value="1"/>
</dbReference>
<dbReference type="Gene3D" id="3.40.50.300">
    <property type="entry name" value="P-loop containing nucleotide triphosphate hydrolases"/>
    <property type="match status" value="1"/>
</dbReference>
<dbReference type="InterPro" id="IPR003593">
    <property type="entry name" value="AAA+_ATPase"/>
</dbReference>
<dbReference type="InterPro" id="IPR039041">
    <property type="entry name" value="Nav/unc-53"/>
</dbReference>
<dbReference type="InterPro" id="IPR027417">
    <property type="entry name" value="P-loop_NTPase"/>
</dbReference>
<dbReference type="PANTHER" id="PTHR12784:SF3">
    <property type="entry name" value="NEURON NAVIGATOR 1"/>
    <property type="match status" value="1"/>
</dbReference>
<dbReference type="PANTHER" id="PTHR12784">
    <property type="entry name" value="STEERIN"/>
    <property type="match status" value="1"/>
</dbReference>
<dbReference type="Pfam" id="PF25408">
    <property type="entry name" value="AAA_lid_NAV1"/>
    <property type="match status" value="1"/>
</dbReference>
<dbReference type="Pfam" id="PF23092">
    <property type="entry name" value="Ubiquitin_6"/>
    <property type="match status" value="1"/>
</dbReference>
<dbReference type="SMART" id="SM00382">
    <property type="entry name" value="AAA"/>
    <property type="match status" value="1"/>
</dbReference>
<dbReference type="SUPFAM" id="SSF52540">
    <property type="entry name" value="P-loop containing nucleoside triphosphate hydrolases"/>
    <property type="match status" value="1"/>
</dbReference>